<name>RL24_PARDP</name>
<keyword id="KW-1185">Reference proteome</keyword>
<keyword id="KW-0687">Ribonucleoprotein</keyword>
<keyword id="KW-0689">Ribosomal protein</keyword>
<keyword id="KW-0694">RNA-binding</keyword>
<keyword id="KW-0699">rRNA-binding</keyword>
<organism>
    <name type="scientific">Paracoccus denitrificans (strain Pd 1222)</name>
    <dbReference type="NCBI Taxonomy" id="318586"/>
    <lineage>
        <taxon>Bacteria</taxon>
        <taxon>Pseudomonadati</taxon>
        <taxon>Pseudomonadota</taxon>
        <taxon>Alphaproteobacteria</taxon>
        <taxon>Rhodobacterales</taxon>
        <taxon>Paracoccaceae</taxon>
        <taxon>Paracoccus</taxon>
    </lineage>
</organism>
<protein>
    <recommendedName>
        <fullName evidence="1">Large ribosomal subunit protein uL24</fullName>
    </recommendedName>
    <alternativeName>
        <fullName evidence="2">50S ribosomal protein L24</fullName>
    </alternativeName>
</protein>
<dbReference type="EMBL" id="CP000489">
    <property type="protein sequence ID" value="ABL68882.1"/>
    <property type="molecule type" value="Genomic_DNA"/>
</dbReference>
<dbReference type="RefSeq" id="WP_011747110.1">
    <property type="nucleotide sequence ID" value="NC_008686.1"/>
</dbReference>
<dbReference type="SMR" id="A1B038"/>
<dbReference type="STRING" id="318586.Pden_0770"/>
<dbReference type="EnsemblBacteria" id="ABL68882">
    <property type="protein sequence ID" value="ABL68882"/>
    <property type="gene ID" value="Pden_0770"/>
</dbReference>
<dbReference type="GeneID" id="93451994"/>
<dbReference type="KEGG" id="pde:Pden_0770"/>
<dbReference type="eggNOG" id="COG0198">
    <property type="taxonomic scope" value="Bacteria"/>
</dbReference>
<dbReference type="HOGENOM" id="CLU_093315_2_2_5"/>
<dbReference type="OrthoDB" id="9807419at2"/>
<dbReference type="Proteomes" id="UP000000361">
    <property type="component" value="Chromosome 1"/>
</dbReference>
<dbReference type="GO" id="GO:1990904">
    <property type="term" value="C:ribonucleoprotein complex"/>
    <property type="evidence" value="ECO:0007669"/>
    <property type="project" value="UniProtKB-KW"/>
</dbReference>
<dbReference type="GO" id="GO:0005840">
    <property type="term" value="C:ribosome"/>
    <property type="evidence" value="ECO:0007669"/>
    <property type="project" value="UniProtKB-KW"/>
</dbReference>
<dbReference type="GO" id="GO:0019843">
    <property type="term" value="F:rRNA binding"/>
    <property type="evidence" value="ECO:0007669"/>
    <property type="project" value="UniProtKB-UniRule"/>
</dbReference>
<dbReference type="GO" id="GO:0003735">
    <property type="term" value="F:structural constituent of ribosome"/>
    <property type="evidence" value="ECO:0007669"/>
    <property type="project" value="InterPro"/>
</dbReference>
<dbReference type="GO" id="GO:0006412">
    <property type="term" value="P:translation"/>
    <property type="evidence" value="ECO:0007669"/>
    <property type="project" value="UniProtKB-UniRule"/>
</dbReference>
<dbReference type="CDD" id="cd06089">
    <property type="entry name" value="KOW_RPL26"/>
    <property type="match status" value="1"/>
</dbReference>
<dbReference type="Gene3D" id="2.30.30.30">
    <property type="match status" value="1"/>
</dbReference>
<dbReference type="HAMAP" id="MF_01326_B">
    <property type="entry name" value="Ribosomal_uL24_B"/>
    <property type="match status" value="1"/>
</dbReference>
<dbReference type="InterPro" id="IPR005824">
    <property type="entry name" value="KOW"/>
</dbReference>
<dbReference type="InterPro" id="IPR014722">
    <property type="entry name" value="Rib_uL2_dom2"/>
</dbReference>
<dbReference type="InterPro" id="IPR003256">
    <property type="entry name" value="Ribosomal_uL24"/>
</dbReference>
<dbReference type="InterPro" id="IPR005825">
    <property type="entry name" value="Ribosomal_uL24_CS"/>
</dbReference>
<dbReference type="InterPro" id="IPR041988">
    <property type="entry name" value="Ribosomal_uL24_KOW"/>
</dbReference>
<dbReference type="InterPro" id="IPR008991">
    <property type="entry name" value="Translation_prot_SH3-like_sf"/>
</dbReference>
<dbReference type="NCBIfam" id="TIGR01079">
    <property type="entry name" value="rplX_bact"/>
    <property type="match status" value="1"/>
</dbReference>
<dbReference type="PANTHER" id="PTHR12903">
    <property type="entry name" value="MITOCHONDRIAL RIBOSOMAL PROTEIN L24"/>
    <property type="match status" value="1"/>
</dbReference>
<dbReference type="Pfam" id="PF00467">
    <property type="entry name" value="KOW"/>
    <property type="match status" value="1"/>
</dbReference>
<dbReference type="Pfam" id="PF17136">
    <property type="entry name" value="ribosomal_L24"/>
    <property type="match status" value="1"/>
</dbReference>
<dbReference type="SMART" id="SM00739">
    <property type="entry name" value="KOW"/>
    <property type="match status" value="1"/>
</dbReference>
<dbReference type="SUPFAM" id="SSF50104">
    <property type="entry name" value="Translation proteins SH3-like domain"/>
    <property type="match status" value="1"/>
</dbReference>
<dbReference type="PROSITE" id="PS01108">
    <property type="entry name" value="RIBOSOMAL_L24"/>
    <property type="match status" value="1"/>
</dbReference>
<sequence>MAAKLKKGDKVVVLTGKDKGKQGEISAVFPKENKAVVDGINIAIRHQRQTQTSQGGRVAKAMPIDLSNLALLDKNGKATRVGFREEDGKKVRFAKTTGDVI</sequence>
<proteinExistence type="inferred from homology"/>
<reference key="1">
    <citation type="submission" date="2006-12" db="EMBL/GenBank/DDBJ databases">
        <title>Complete sequence of chromosome 1 of Paracoccus denitrificans PD1222.</title>
        <authorList>
            <person name="Copeland A."/>
            <person name="Lucas S."/>
            <person name="Lapidus A."/>
            <person name="Barry K."/>
            <person name="Detter J.C."/>
            <person name="Glavina del Rio T."/>
            <person name="Hammon N."/>
            <person name="Israni S."/>
            <person name="Dalin E."/>
            <person name="Tice H."/>
            <person name="Pitluck S."/>
            <person name="Munk A.C."/>
            <person name="Brettin T."/>
            <person name="Bruce D."/>
            <person name="Han C."/>
            <person name="Tapia R."/>
            <person name="Gilna P."/>
            <person name="Schmutz J."/>
            <person name="Larimer F."/>
            <person name="Land M."/>
            <person name="Hauser L."/>
            <person name="Kyrpides N."/>
            <person name="Lykidis A."/>
            <person name="Spiro S."/>
            <person name="Richardson D.J."/>
            <person name="Moir J.W.B."/>
            <person name="Ferguson S.J."/>
            <person name="van Spanning R.J.M."/>
            <person name="Richardson P."/>
        </authorList>
    </citation>
    <scope>NUCLEOTIDE SEQUENCE [LARGE SCALE GENOMIC DNA]</scope>
    <source>
        <strain>Pd 1222</strain>
    </source>
</reference>
<accession>A1B038</accession>
<gene>
    <name evidence="1" type="primary">rplX</name>
    <name type="ordered locus">Pden_0770</name>
</gene>
<comment type="function">
    <text evidence="1">One of two assembly initiator proteins, it binds directly to the 5'-end of the 23S rRNA, where it nucleates assembly of the 50S subunit.</text>
</comment>
<comment type="function">
    <text evidence="1">One of the proteins that surrounds the polypeptide exit tunnel on the outside of the subunit.</text>
</comment>
<comment type="subunit">
    <text evidence="1">Part of the 50S ribosomal subunit.</text>
</comment>
<comment type="similarity">
    <text evidence="1">Belongs to the universal ribosomal protein uL24 family.</text>
</comment>
<feature type="chain" id="PRO_1000052272" description="Large ribosomal subunit protein uL24">
    <location>
        <begin position="1"/>
        <end position="101"/>
    </location>
</feature>
<evidence type="ECO:0000255" key="1">
    <source>
        <dbReference type="HAMAP-Rule" id="MF_01326"/>
    </source>
</evidence>
<evidence type="ECO:0000305" key="2"/>